<protein>
    <recommendedName>
        <fullName evidence="1">Protein-export protein SecB</fullName>
    </recommendedName>
</protein>
<accession>A4JI42</accession>
<dbReference type="EMBL" id="CP000614">
    <property type="protein sequence ID" value="ABO55945.1"/>
    <property type="molecule type" value="Genomic_DNA"/>
</dbReference>
<dbReference type="SMR" id="A4JI42"/>
<dbReference type="KEGG" id="bvi:Bcep1808_2954"/>
<dbReference type="eggNOG" id="COG1952">
    <property type="taxonomic scope" value="Bacteria"/>
</dbReference>
<dbReference type="HOGENOM" id="CLU_111574_1_0_4"/>
<dbReference type="Proteomes" id="UP000002287">
    <property type="component" value="Chromosome 1"/>
</dbReference>
<dbReference type="GO" id="GO:0005737">
    <property type="term" value="C:cytoplasm"/>
    <property type="evidence" value="ECO:0007669"/>
    <property type="project" value="UniProtKB-SubCell"/>
</dbReference>
<dbReference type="GO" id="GO:0051082">
    <property type="term" value="F:unfolded protein binding"/>
    <property type="evidence" value="ECO:0007669"/>
    <property type="project" value="InterPro"/>
</dbReference>
<dbReference type="GO" id="GO:0006457">
    <property type="term" value="P:protein folding"/>
    <property type="evidence" value="ECO:0007669"/>
    <property type="project" value="UniProtKB-UniRule"/>
</dbReference>
<dbReference type="GO" id="GO:0051262">
    <property type="term" value="P:protein tetramerization"/>
    <property type="evidence" value="ECO:0007669"/>
    <property type="project" value="InterPro"/>
</dbReference>
<dbReference type="GO" id="GO:0015031">
    <property type="term" value="P:protein transport"/>
    <property type="evidence" value="ECO:0007669"/>
    <property type="project" value="UniProtKB-UniRule"/>
</dbReference>
<dbReference type="Gene3D" id="3.10.420.10">
    <property type="entry name" value="SecB-like"/>
    <property type="match status" value="1"/>
</dbReference>
<dbReference type="HAMAP" id="MF_00821">
    <property type="entry name" value="SecB"/>
    <property type="match status" value="1"/>
</dbReference>
<dbReference type="InterPro" id="IPR003708">
    <property type="entry name" value="SecB"/>
</dbReference>
<dbReference type="InterPro" id="IPR035958">
    <property type="entry name" value="SecB-like_sf"/>
</dbReference>
<dbReference type="NCBIfam" id="NF004392">
    <property type="entry name" value="PRK05751.1-3"/>
    <property type="match status" value="1"/>
</dbReference>
<dbReference type="NCBIfam" id="NF004394">
    <property type="entry name" value="PRK05751.1-5"/>
    <property type="match status" value="1"/>
</dbReference>
<dbReference type="NCBIfam" id="TIGR00809">
    <property type="entry name" value="secB"/>
    <property type="match status" value="1"/>
</dbReference>
<dbReference type="PANTHER" id="PTHR36918">
    <property type="match status" value="1"/>
</dbReference>
<dbReference type="PANTHER" id="PTHR36918:SF1">
    <property type="entry name" value="PROTEIN-EXPORT PROTEIN SECB"/>
    <property type="match status" value="1"/>
</dbReference>
<dbReference type="Pfam" id="PF02556">
    <property type="entry name" value="SecB"/>
    <property type="match status" value="1"/>
</dbReference>
<dbReference type="PRINTS" id="PR01594">
    <property type="entry name" value="SECBCHAPRONE"/>
</dbReference>
<dbReference type="SUPFAM" id="SSF54611">
    <property type="entry name" value="SecB-like"/>
    <property type="match status" value="1"/>
</dbReference>
<keyword id="KW-0143">Chaperone</keyword>
<keyword id="KW-0963">Cytoplasm</keyword>
<keyword id="KW-0653">Protein transport</keyword>
<keyword id="KW-0811">Translocation</keyword>
<keyword id="KW-0813">Transport</keyword>
<evidence type="ECO:0000255" key="1">
    <source>
        <dbReference type="HAMAP-Rule" id="MF_00821"/>
    </source>
</evidence>
<proteinExistence type="inferred from homology"/>
<sequence length="159" mass="17501">MSDVENQPFFNIQRVYLKDMSLEQPNSPAIFLEQDMPSVEVEVDVKAERLAESVFEVVVSGTVTAKVKDKVAFLIEAKQAGIFDIRNIPDEQLDPLVGIACPTILFPYLRSNIADAITRAGFPPIHLAEINFQALYEQRLAQLQQQAGAAGAPNGTTLN</sequence>
<reference key="1">
    <citation type="submission" date="2007-03" db="EMBL/GenBank/DDBJ databases">
        <title>Complete sequence of chromosome 1 of Burkholderia vietnamiensis G4.</title>
        <authorList>
            <consortium name="US DOE Joint Genome Institute"/>
            <person name="Copeland A."/>
            <person name="Lucas S."/>
            <person name="Lapidus A."/>
            <person name="Barry K."/>
            <person name="Detter J.C."/>
            <person name="Glavina del Rio T."/>
            <person name="Hammon N."/>
            <person name="Israni S."/>
            <person name="Dalin E."/>
            <person name="Tice H."/>
            <person name="Pitluck S."/>
            <person name="Chain P."/>
            <person name="Malfatti S."/>
            <person name="Shin M."/>
            <person name="Vergez L."/>
            <person name="Schmutz J."/>
            <person name="Larimer F."/>
            <person name="Land M."/>
            <person name="Hauser L."/>
            <person name="Kyrpides N."/>
            <person name="Tiedje J."/>
            <person name="Richardson P."/>
        </authorList>
    </citation>
    <scope>NUCLEOTIDE SEQUENCE [LARGE SCALE GENOMIC DNA]</scope>
    <source>
        <strain>G4 / LMG 22486</strain>
    </source>
</reference>
<gene>
    <name evidence="1" type="primary">secB</name>
    <name type="ordered locus">Bcep1808_2954</name>
</gene>
<comment type="function">
    <text evidence="1">One of the proteins required for the normal export of preproteins out of the cell cytoplasm. It is a molecular chaperone that binds to a subset of precursor proteins, maintaining them in a translocation-competent state. It also specifically binds to its receptor SecA.</text>
</comment>
<comment type="subunit">
    <text evidence="1">Homotetramer, a dimer of dimers. One homotetramer interacts with 1 SecA dimer.</text>
</comment>
<comment type="subcellular location">
    <subcellularLocation>
        <location evidence="1">Cytoplasm</location>
    </subcellularLocation>
</comment>
<comment type="similarity">
    <text evidence="1">Belongs to the SecB family.</text>
</comment>
<name>SECB_BURVG</name>
<organism>
    <name type="scientific">Burkholderia vietnamiensis (strain G4 / LMG 22486)</name>
    <name type="common">Burkholderia cepacia (strain R1808)</name>
    <dbReference type="NCBI Taxonomy" id="269482"/>
    <lineage>
        <taxon>Bacteria</taxon>
        <taxon>Pseudomonadati</taxon>
        <taxon>Pseudomonadota</taxon>
        <taxon>Betaproteobacteria</taxon>
        <taxon>Burkholderiales</taxon>
        <taxon>Burkholderiaceae</taxon>
        <taxon>Burkholderia</taxon>
        <taxon>Burkholderia cepacia complex</taxon>
    </lineage>
</organism>
<feature type="chain" id="PRO_1000062468" description="Protein-export protein SecB">
    <location>
        <begin position="1"/>
        <end position="159"/>
    </location>
</feature>